<evidence type="ECO:0000305" key="1"/>
<proteinExistence type="evidence at protein level"/>
<reference key="1">
    <citation type="journal article" date="1990" name="Virology">
        <title>Nucleotide sequence and genomic organization of apple chlorotic leaf spot closterovirus.</title>
        <authorList>
            <person name="German S."/>
            <person name="Candresse T."/>
            <person name="Lanneau M."/>
            <person name="Huet J.-C."/>
            <person name="Pernollet J.-C."/>
            <person name="Dunez J."/>
        </authorList>
    </citation>
    <scope>NUCLEOTIDE SEQUENCE [GENOMIC RNA]</scope>
    <scope>PROTEIN SEQUENCE OF 63-70</scope>
</reference>
<comment type="subcellular location">
    <subcellularLocation>
        <location evidence="1">Virion</location>
    </subcellularLocation>
</comment>
<comment type="PTM">
    <text>The N-terminus is blocked.</text>
</comment>
<accession>P27737</accession>
<keyword id="KW-0167">Capsid protein</keyword>
<keyword id="KW-0903">Direct protein sequencing</keyword>
<keyword id="KW-1139">Helical capsid protein</keyword>
<keyword id="KW-1185">Reference proteome</keyword>
<keyword id="KW-0946">Virion</keyword>
<dbReference type="EMBL" id="M58152">
    <property type="protein sequence ID" value="AAA42589.1"/>
    <property type="molecule type" value="Genomic_RNA"/>
</dbReference>
<dbReference type="PIR" id="C45353">
    <property type="entry name" value="C45353"/>
</dbReference>
<dbReference type="RefSeq" id="NP_040553.1">
    <property type="nucleotide sequence ID" value="NC_001409.1"/>
</dbReference>
<dbReference type="GeneID" id="1493997"/>
<dbReference type="KEGG" id="vg:1493997"/>
<dbReference type="Proteomes" id="UP000007025">
    <property type="component" value="Segment"/>
</dbReference>
<dbReference type="GO" id="GO:0019029">
    <property type="term" value="C:helical viral capsid"/>
    <property type="evidence" value="ECO:0007669"/>
    <property type="project" value="UniProtKB-KW"/>
</dbReference>
<dbReference type="InterPro" id="IPR008879">
    <property type="entry name" value="Coat_protein_tricho/vitivirus"/>
</dbReference>
<dbReference type="Pfam" id="PF05892">
    <property type="entry name" value="Tricho_coat"/>
    <property type="match status" value="1"/>
</dbReference>
<dbReference type="PIRSF" id="PIRSF004075">
    <property type="entry name" value="Coat_protein_tricho/vitivirus"/>
    <property type="match status" value="1"/>
</dbReference>
<organismHost>
    <name type="scientific">Crataegus</name>
    <name type="common">hawthorn</name>
    <dbReference type="NCBI Taxonomy" id="23159"/>
</organismHost>
<organismHost>
    <name type="scientific">Cydonia oblonga</name>
    <name type="common">Quince</name>
    <name type="synonym">Pyrus cydonia</name>
    <dbReference type="NCBI Taxonomy" id="36610"/>
</organismHost>
<organismHost>
    <name type="scientific">Malus sylvestris</name>
    <name type="common">European crab apple</name>
    <dbReference type="NCBI Taxonomy" id="3752"/>
</organismHost>
<organismHost>
    <name type="scientific">Prunus armeniaca</name>
    <name type="common">Apricot</name>
    <name type="synonym">Armeniaca vulgaris</name>
    <dbReference type="NCBI Taxonomy" id="36596"/>
</organismHost>
<organismHost>
    <name type="scientific">Prunus domestica</name>
    <name type="common">Garden plum</name>
    <dbReference type="NCBI Taxonomy" id="3758"/>
</organismHost>
<organismHost>
    <name type="scientific">Prunus persica</name>
    <name type="common">Peach</name>
    <name type="synonym">Amygdalus persica</name>
    <dbReference type="NCBI Taxonomy" id="3760"/>
</organismHost>
<organismHost>
    <name type="scientific">Prunus spinosa</name>
    <name type="common">Blackthorn</name>
    <name type="synonym">Prunus domestica var. spinosa</name>
    <dbReference type="NCBI Taxonomy" id="114937"/>
</organismHost>
<organismHost>
    <name type="scientific">Pyrus communis</name>
    <name type="common">Pear</name>
    <name type="synonym">Pyrus domestica</name>
    <dbReference type="NCBI Taxonomy" id="23211"/>
</organismHost>
<feature type="chain" id="PRO_0000222540" description="Capsid protein">
    <location>
        <begin position="1"/>
        <end position="193"/>
    </location>
</feature>
<organism>
    <name type="scientific">Apple chlorotic leaf spot virus (isolate plum P863)</name>
    <name type="common">ACLSV</name>
    <dbReference type="NCBI Taxonomy" id="73473"/>
    <lineage>
        <taxon>Viruses</taxon>
        <taxon>Riboviria</taxon>
        <taxon>Orthornavirae</taxon>
        <taxon>Kitrinoviricota</taxon>
        <taxon>Alsuviricetes</taxon>
        <taxon>Tymovirales</taxon>
        <taxon>Betaflexiviridae</taxon>
        <taxon>Trivirinae</taxon>
        <taxon>Trichovirus</taxon>
        <taxon>Trichovirus mali</taxon>
    </lineage>
</organism>
<sequence>MAAVLNLQLKVDASLKAFLGAENRPLHGKTGATLEQILESIFANIAIQGTSEQTEFLDLVVEVKSMEDQSVLGSYNLKEVVNLIKAFKTTSSDPNINKMTFRQVCEAFAPEARNGLVKLKYKGVFTNLFTTMPEVGSKYPELMFDFNKGLNMFIMNKAQQKVITNMNRRLLQTEFAKSENEAKLSSVSTDLCI</sequence>
<protein>
    <recommendedName>
        <fullName>Capsid protein</fullName>
    </recommendedName>
    <alternativeName>
        <fullName>Coat protein</fullName>
        <shortName>CP</shortName>
    </alternativeName>
</protein>
<name>CAPSD_ACLSP</name>